<reference key="1">
    <citation type="submission" date="2007-02" db="EMBL/GenBank/DDBJ databases">
        <title>Complete sequence of Clostridium thermocellum ATCC 27405.</title>
        <authorList>
            <consortium name="US DOE Joint Genome Institute"/>
            <person name="Copeland A."/>
            <person name="Lucas S."/>
            <person name="Lapidus A."/>
            <person name="Barry K."/>
            <person name="Detter J.C."/>
            <person name="Glavina del Rio T."/>
            <person name="Hammon N."/>
            <person name="Israni S."/>
            <person name="Dalin E."/>
            <person name="Tice H."/>
            <person name="Pitluck S."/>
            <person name="Chertkov O."/>
            <person name="Brettin T."/>
            <person name="Bruce D."/>
            <person name="Han C."/>
            <person name="Tapia R."/>
            <person name="Gilna P."/>
            <person name="Schmutz J."/>
            <person name="Larimer F."/>
            <person name="Land M."/>
            <person name="Hauser L."/>
            <person name="Kyrpides N."/>
            <person name="Mikhailova N."/>
            <person name="Wu J.H.D."/>
            <person name="Newcomb M."/>
            <person name="Richardson P."/>
        </authorList>
    </citation>
    <scope>NUCLEOTIDE SEQUENCE [LARGE SCALE GENOMIC DNA]</scope>
    <source>
        <strain>ATCC 27405 / DSM 1237 / JCM 9322 / NBRC 103400 / NCIMB 10682 / NRRL B-4536 / VPI 7372</strain>
    </source>
</reference>
<proteinExistence type="inferred from homology"/>
<sequence length="94" mass="10863">MSTPKKDKNNKEVDKTDVKTPVKVRRAKKKICAFCVDKVERIDYKDVAKLKKYISERGKILPRRISGNCAKHQRQLTVAIKRARHIALLPYTAD</sequence>
<name>RS18_ACET2</name>
<protein>
    <recommendedName>
        <fullName evidence="1">Small ribosomal subunit protein bS18</fullName>
    </recommendedName>
    <alternativeName>
        <fullName evidence="2">30S ribosomal protein S18</fullName>
    </alternativeName>
</protein>
<accession>A3DHF8</accession>
<feature type="chain" id="PRO_1000003489" description="Small ribosomal subunit protein bS18">
    <location>
        <begin position="1"/>
        <end position="94"/>
    </location>
</feature>
<comment type="function">
    <text evidence="1">Binds as a heterodimer with protein bS6 to the central domain of the 16S rRNA, where it helps stabilize the platform of the 30S subunit.</text>
</comment>
<comment type="subunit">
    <text evidence="1">Part of the 30S ribosomal subunit. Forms a tight heterodimer with protein bS6.</text>
</comment>
<comment type="similarity">
    <text evidence="1">Belongs to the bacterial ribosomal protein bS18 family.</text>
</comment>
<keyword id="KW-1185">Reference proteome</keyword>
<keyword id="KW-0687">Ribonucleoprotein</keyword>
<keyword id="KW-0689">Ribosomal protein</keyword>
<keyword id="KW-0694">RNA-binding</keyword>
<keyword id="KW-0699">rRNA-binding</keyword>
<dbReference type="EMBL" id="CP000568">
    <property type="protein sequence ID" value="ABN53387.1"/>
    <property type="molecule type" value="Genomic_DNA"/>
</dbReference>
<dbReference type="RefSeq" id="WP_003513685.1">
    <property type="nucleotide sequence ID" value="NC_009012.1"/>
</dbReference>
<dbReference type="SMR" id="A3DHF8"/>
<dbReference type="STRING" id="203119.Cthe_2185"/>
<dbReference type="GeneID" id="35803040"/>
<dbReference type="KEGG" id="cth:Cthe_2185"/>
<dbReference type="eggNOG" id="COG0238">
    <property type="taxonomic scope" value="Bacteria"/>
</dbReference>
<dbReference type="HOGENOM" id="CLU_148710_0_3_9"/>
<dbReference type="OrthoDB" id="9812008at2"/>
<dbReference type="Proteomes" id="UP000002145">
    <property type="component" value="Chromosome"/>
</dbReference>
<dbReference type="GO" id="GO:0022627">
    <property type="term" value="C:cytosolic small ribosomal subunit"/>
    <property type="evidence" value="ECO:0007669"/>
    <property type="project" value="TreeGrafter"/>
</dbReference>
<dbReference type="GO" id="GO:0070181">
    <property type="term" value="F:small ribosomal subunit rRNA binding"/>
    <property type="evidence" value="ECO:0007669"/>
    <property type="project" value="TreeGrafter"/>
</dbReference>
<dbReference type="GO" id="GO:0003735">
    <property type="term" value="F:structural constituent of ribosome"/>
    <property type="evidence" value="ECO:0007669"/>
    <property type="project" value="InterPro"/>
</dbReference>
<dbReference type="GO" id="GO:0006412">
    <property type="term" value="P:translation"/>
    <property type="evidence" value="ECO:0007669"/>
    <property type="project" value="UniProtKB-UniRule"/>
</dbReference>
<dbReference type="FunFam" id="4.10.640.10:FF:000004">
    <property type="entry name" value="30S ribosomal protein S18"/>
    <property type="match status" value="1"/>
</dbReference>
<dbReference type="Gene3D" id="4.10.640.10">
    <property type="entry name" value="Ribosomal protein S18"/>
    <property type="match status" value="1"/>
</dbReference>
<dbReference type="HAMAP" id="MF_00270">
    <property type="entry name" value="Ribosomal_bS18"/>
    <property type="match status" value="1"/>
</dbReference>
<dbReference type="InterPro" id="IPR001648">
    <property type="entry name" value="Ribosomal_bS18"/>
</dbReference>
<dbReference type="InterPro" id="IPR018275">
    <property type="entry name" value="Ribosomal_bS18_CS"/>
</dbReference>
<dbReference type="InterPro" id="IPR036870">
    <property type="entry name" value="Ribosomal_bS18_sf"/>
</dbReference>
<dbReference type="NCBIfam" id="TIGR00165">
    <property type="entry name" value="S18"/>
    <property type="match status" value="1"/>
</dbReference>
<dbReference type="PANTHER" id="PTHR13479">
    <property type="entry name" value="30S RIBOSOMAL PROTEIN S18"/>
    <property type="match status" value="1"/>
</dbReference>
<dbReference type="PANTHER" id="PTHR13479:SF40">
    <property type="entry name" value="SMALL RIBOSOMAL SUBUNIT PROTEIN BS18M"/>
    <property type="match status" value="1"/>
</dbReference>
<dbReference type="Pfam" id="PF01084">
    <property type="entry name" value="Ribosomal_S18"/>
    <property type="match status" value="1"/>
</dbReference>
<dbReference type="PRINTS" id="PR00974">
    <property type="entry name" value="RIBOSOMALS18"/>
</dbReference>
<dbReference type="SUPFAM" id="SSF46911">
    <property type="entry name" value="Ribosomal protein S18"/>
    <property type="match status" value="1"/>
</dbReference>
<dbReference type="PROSITE" id="PS00057">
    <property type="entry name" value="RIBOSOMAL_S18"/>
    <property type="match status" value="1"/>
</dbReference>
<gene>
    <name evidence="1" type="primary">rpsR</name>
    <name type="ordered locus">Cthe_2185</name>
</gene>
<evidence type="ECO:0000255" key="1">
    <source>
        <dbReference type="HAMAP-Rule" id="MF_00270"/>
    </source>
</evidence>
<evidence type="ECO:0000305" key="2"/>
<organism>
    <name type="scientific">Acetivibrio thermocellus (strain ATCC 27405 / DSM 1237 / JCM 9322 / NBRC 103400 / NCIMB 10682 / NRRL B-4536 / VPI 7372)</name>
    <name type="common">Clostridium thermocellum</name>
    <dbReference type="NCBI Taxonomy" id="203119"/>
    <lineage>
        <taxon>Bacteria</taxon>
        <taxon>Bacillati</taxon>
        <taxon>Bacillota</taxon>
        <taxon>Clostridia</taxon>
        <taxon>Eubacteriales</taxon>
        <taxon>Oscillospiraceae</taxon>
        <taxon>Acetivibrio</taxon>
    </lineage>
</organism>